<comment type="induction">
    <text evidence="1 2 3 4">A member of the dormancy regulon. Induced in response to reduced oxygen tension (hypoxia), low levels of nitric oxide (NO) and carbon monoxide (CO). It is hoped that this regulon will give insight into the latent, or dormant phase of infection.</text>
</comment>
<accession>P9WMA5</accession>
<accession>L0T2J1</accession>
<accession>O53625</accession>
<accession>Q7DAH5</accession>
<feature type="chain" id="PRO_0000392680" description="Uncharacterized protein Rv0080">
    <location>
        <begin position="1"/>
        <end position="152"/>
    </location>
</feature>
<name>Y0080_MYCTU</name>
<organism>
    <name type="scientific">Mycobacterium tuberculosis (strain ATCC 25618 / H37Rv)</name>
    <dbReference type="NCBI Taxonomy" id="83332"/>
    <lineage>
        <taxon>Bacteria</taxon>
        <taxon>Bacillati</taxon>
        <taxon>Actinomycetota</taxon>
        <taxon>Actinomycetes</taxon>
        <taxon>Mycobacteriales</taxon>
        <taxon>Mycobacteriaceae</taxon>
        <taxon>Mycobacterium</taxon>
        <taxon>Mycobacterium tuberculosis complex</taxon>
    </lineage>
</organism>
<proteinExistence type="evidence at protein level"/>
<gene>
    <name type="ordered locus">Rv0080</name>
</gene>
<evidence type="ECO:0000269" key="1">
    <source>
    </source>
</evidence>
<evidence type="ECO:0000269" key="2">
    <source>
    </source>
</evidence>
<evidence type="ECO:0000269" key="3">
    <source>
    </source>
</evidence>
<evidence type="ECO:0000269" key="4">
    <source>
    </source>
</evidence>
<keyword id="KW-1185">Reference proteome</keyword>
<sequence length="152" mass="16574">MSPGSRRASPQSAREVVELDRDEAMRLLASVDHGRVVFTRAALPAIRPVNHLVVDGRVIGRTRLTAKVSVAVRSSADAGVVVAYEADDLDPRRRTGWSVVVTGLATEVSDPEQVARYQRLLHPWVNMAMDTVVAIEPEIVTGIRIVADSRTP</sequence>
<dbReference type="EMBL" id="AL123456">
    <property type="protein sequence ID" value="CCP42805.1"/>
    <property type="molecule type" value="Genomic_DNA"/>
</dbReference>
<dbReference type="PIR" id="A70850">
    <property type="entry name" value="A70850"/>
</dbReference>
<dbReference type="RefSeq" id="NP_214594.1">
    <property type="nucleotide sequence ID" value="NC_000962.3"/>
</dbReference>
<dbReference type="RefSeq" id="WP_003899804.1">
    <property type="nucleotide sequence ID" value="NZ_NVQJ01000005.1"/>
</dbReference>
<dbReference type="SMR" id="P9WMA5"/>
<dbReference type="STRING" id="83332.Rv0080"/>
<dbReference type="PaxDb" id="83332-Rv0080"/>
<dbReference type="GeneID" id="886966"/>
<dbReference type="KEGG" id="mtu:Rv0080"/>
<dbReference type="KEGG" id="mtv:RVBD_0080"/>
<dbReference type="TubercuList" id="Rv0080"/>
<dbReference type="eggNOG" id="COG3467">
    <property type="taxonomic scope" value="Bacteria"/>
</dbReference>
<dbReference type="InParanoid" id="P9WMA5"/>
<dbReference type="OrthoDB" id="3212118at2"/>
<dbReference type="PhylomeDB" id="P9WMA5"/>
<dbReference type="Proteomes" id="UP000001584">
    <property type="component" value="Chromosome"/>
</dbReference>
<dbReference type="Gene3D" id="2.30.110.10">
    <property type="entry name" value="Electron Transport, Fmn-binding Protein, Chain A"/>
    <property type="match status" value="1"/>
</dbReference>
<dbReference type="InterPro" id="IPR024747">
    <property type="entry name" value="Pyridox_Oxase-rel"/>
</dbReference>
<dbReference type="InterPro" id="IPR012349">
    <property type="entry name" value="Split_barrel_FMN-bd"/>
</dbReference>
<dbReference type="Pfam" id="PF12900">
    <property type="entry name" value="Pyridox_ox_2"/>
    <property type="match status" value="1"/>
</dbReference>
<dbReference type="SUPFAM" id="SSF50475">
    <property type="entry name" value="FMN-binding split barrel"/>
    <property type="match status" value="1"/>
</dbReference>
<protein>
    <recommendedName>
        <fullName>Uncharacterized protein Rv0080</fullName>
    </recommendedName>
</protein>
<reference key="1">
    <citation type="journal article" date="1998" name="Nature">
        <title>Deciphering the biology of Mycobacterium tuberculosis from the complete genome sequence.</title>
        <authorList>
            <person name="Cole S.T."/>
            <person name="Brosch R."/>
            <person name="Parkhill J."/>
            <person name="Garnier T."/>
            <person name="Churcher C.M."/>
            <person name="Harris D.E."/>
            <person name="Gordon S.V."/>
            <person name="Eiglmeier K."/>
            <person name="Gas S."/>
            <person name="Barry C.E. III"/>
            <person name="Tekaia F."/>
            <person name="Badcock K."/>
            <person name="Basham D."/>
            <person name="Brown D."/>
            <person name="Chillingworth T."/>
            <person name="Connor R."/>
            <person name="Davies R.M."/>
            <person name="Devlin K."/>
            <person name="Feltwell T."/>
            <person name="Gentles S."/>
            <person name="Hamlin N."/>
            <person name="Holroyd S."/>
            <person name="Hornsby T."/>
            <person name="Jagels K."/>
            <person name="Krogh A."/>
            <person name="McLean J."/>
            <person name="Moule S."/>
            <person name="Murphy L.D."/>
            <person name="Oliver S."/>
            <person name="Osborne J."/>
            <person name="Quail M.A."/>
            <person name="Rajandream M.A."/>
            <person name="Rogers J."/>
            <person name="Rutter S."/>
            <person name="Seeger K."/>
            <person name="Skelton S."/>
            <person name="Squares S."/>
            <person name="Squares R."/>
            <person name="Sulston J.E."/>
            <person name="Taylor K."/>
            <person name="Whitehead S."/>
            <person name="Barrell B.G."/>
        </authorList>
    </citation>
    <scope>NUCLEOTIDE SEQUENCE [LARGE SCALE GENOMIC DNA]</scope>
    <source>
        <strain>ATCC 25618 / H37Rv</strain>
    </source>
</reference>
<reference key="2">
    <citation type="journal article" date="2001" name="Proc. Natl. Acad. Sci. U.S.A.">
        <title>Regulation of the Mycobacterium tuberculosis hypoxic response gene encoding alpha -crystallin.</title>
        <authorList>
            <person name="Sherman D.R."/>
            <person name="Voskuil M."/>
            <person name="Schnappinger D."/>
            <person name="Liao R."/>
            <person name="Harrell M.I."/>
            <person name="Schoolnik G.K."/>
        </authorList>
    </citation>
    <scope>INDUCTION BY HYPOXIA</scope>
    <source>
        <strain>ATCC 25618 / H37Rv</strain>
    </source>
</reference>
<reference key="3">
    <citation type="journal article" date="2003" name="J. Exp. Med.">
        <title>Inhibition of respiration by nitric oxide induces a Mycobacterium tuberculosis dormancy program.</title>
        <authorList>
            <person name="Voskuil M.I."/>
            <person name="Schnappinger D."/>
            <person name="Visconti K.C."/>
            <person name="Harrell M.I."/>
            <person name="Dolganov G.M."/>
            <person name="Sherman D.R."/>
            <person name="Schoolnik G.K."/>
        </authorList>
    </citation>
    <scope>INDUCTION BY NITRIC OXIDE (NO) AND BY HYPOXIA</scope>
    <scope>DORMANCY REGULON</scope>
    <source>
        <strain>ATCC 25618 / H37Rv</strain>
    </source>
</reference>
<reference key="4">
    <citation type="journal article" date="2008" name="Cell Host Microbe">
        <title>Mycobacterium tuberculosis senses host-derived carbon monoxide during macrophage infection.</title>
        <authorList>
            <person name="Shiloh M.U."/>
            <person name="Manzanillo P."/>
            <person name="Cox J.S."/>
        </authorList>
    </citation>
    <scope>INDUCTION BY CARBON MONOXIDE (CO)</scope>
    <source>
        <strain>ATCC 35801 / TMC 107 / Erdman</strain>
    </source>
</reference>
<reference key="5">
    <citation type="journal article" date="2008" name="J. Biol. Chem.">
        <title>Heme oxygenase-1-derived carbon monoxide induces the Mycobacterium tuberculosis dormancy regulon.</title>
        <authorList>
            <person name="Kumar A."/>
            <person name="Deshane J.S."/>
            <person name="Crossman D.K."/>
            <person name="Bolisetty S."/>
            <person name="Yan B.S."/>
            <person name="Kramnik I."/>
            <person name="Agarwal A."/>
            <person name="Steyn A.J."/>
        </authorList>
    </citation>
    <scope>INDUCTION BY CARBON MONOXIDE (CO)</scope>
    <scope>DORMANCY REGULON</scope>
    <source>
        <strain>ATCC 25618 / H37Rv</strain>
    </source>
</reference>
<reference key="6">
    <citation type="journal article" date="2011" name="Mol. Cell. Proteomics">
        <title>Proteogenomic analysis of Mycobacterium tuberculosis by high resolution mass spectrometry.</title>
        <authorList>
            <person name="Kelkar D.S."/>
            <person name="Kumar D."/>
            <person name="Kumar P."/>
            <person name="Balakrishnan L."/>
            <person name="Muthusamy B."/>
            <person name="Yadav A.K."/>
            <person name="Shrivastava P."/>
            <person name="Marimuthu A."/>
            <person name="Anand S."/>
            <person name="Sundaram H."/>
            <person name="Kingsbury R."/>
            <person name="Harsha H.C."/>
            <person name="Nair B."/>
            <person name="Prasad T.S."/>
            <person name="Chauhan D.S."/>
            <person name="Katoch K."/>
            <person name="Katoch V.M."/>
            <person name="Kumar P."/>
            <person name="Chaerkady R."/>
            <person name="Ramachandran S."/>
            <person name="Dash D."/>
            <person name="Pandey A."/>
        </authorList>
    </citation>
    <scope>IDENTIFICATION BY MASS SPECTROMETRY [LARGE SCALE ANALYSIS]</scope>
    <source>
        <strain>ATCC 25618 / H37Rv</strain>
    </source>
</reference>